<name>MNME_PSESM</name>
<comment type="function">
    <text evidence="1">Exhibits a very high intrinsic GTPase hydrolysis rate. Involved in the addition of a carboxymethylaminomethyl (cmnm) group at the wobble position (U34) of certain tRNAs, forming tRNA-cmnm(5)s(2)U34.</text>
</comment>
<comment type="cofactor">
    <cofactor evidence="1">
        <name>K(+)</name>
        <dbReference type="ChEBI" id="CHEBI:29103"/>
    </cofactor>
    <text evidence="1">Binds 1 potassium ion per subunit.</text>
</comment>
<comment type="subunit">
    <text evidence="1">Homodimer. Heterotetramer of two MnmE and two MnmG subunits.</text>
</comment>
<comment type="subcellular location">
    <subcellularLocation>
        <location evidence="1">Cytoplasm</location>
    </subcellularLocation>
</comment>
<comment type="similarity">
    <text evidence="1">Belongs to the TRAFAC class TrmE-Era-EngA-EngB-Septin-like GTPase superfamily. TrmE GTPase family.</text>
</comment>
<protein>
    <recommendedName>
        <fullName evidence="1">tRNA modification GTPase MnmE</fullName>
        <ecNumber evidence="1">3.6.-.-</ecNumber>
    </recommendedName>
</protein>
<feature type="chain" id="PRO_0000188907" description="tRNA modification GTPase MnmE">
    <location>
        <begin position="1"/>
        <end position="456"/>
    </location>
</feature>
<feature type="domain" description="TrmE-type G">
    <location>
        <begin position="216"/>
        <end position="379"/>
    </location>
</feature>
<feature type="binding site" evidence="1">
    <location>
        <position position="24"/>
    </location>
    <ligand>
        <name>(6S)-5-formyl-5,6,7,8-tetrahydrofolate</name>
        <dbReference type="ChEBI" id="CHEBI:57457"/>
    </ligand>
</feature>
<feature type="binding site" evidence="1">
    <location>
        <position position="81"/>
    </location>
    <ligand>
        <name>(6S)-5-formyl-5,6,7,8-tetrahydrofolate</name>
        <dbReference type="ChEBI" id="CHEBI:57457"/>
    </ligand>
</feature>
<feature type="binding site" evidence="1">
    <location>
        <position position="120"/>
    </location>
    <ligand>
        <name>(6S)-5-formyl-5,6,7,8-tetrahydrofolate</name>
        <dbReference type="ChEBI" id="CHEBI:57457"/>
    </ligand>
</feature>
<feature type="binding site" evidence="1">
    <location>
        <begin position="226"/>
        <end position="231"/>
    </location>
    <ligand>
        <name>GTP</name>
        <dbReference type="ChEBI" id="CHEBI:37565"/>
    </ligand>
</feature>
<feature type="binding site" evidence="1">
    <location>
        <position position="226"/>
    </location>
    <ligand>
        <name>K(+)</name>
        <dbReference type="ChEBI" id="CHEBI:29103"/>
    </ligand>
</feature>
<feature type="binding site" evidence="1">
    <location>
        <position position="230"/>
    </location>
    <ligand>
        <name>Mg(2+)</name>
        <dbReference type="ChEBI" id="CHEBI:18420"/>
    </ligand>
</feature>
<feature type="binding site" evidence="1">
    <location>
        <begin position="245"/>
        <end position="251"/>
    </location>
    <ligand>
        <name>GTP</name>
        <dbReference type="ChEBI" id="CHEBI:37565"/>
    </ligand>
</feature>
<feature type="binding site" evidence="1">
    <location>
        <position position="245"/>
    </location>
    <ligand>
        <name>K(+)</name>
        <dbReference type="ChEBI" id="CHEBI:29103"/>
    </ligand>
</feature>
<feature type="binding site" evidence="1">
    <location>
        <position position="247"/>
    </location>
    <ligand>
        <name>K(+)</name>
        <dbReference type="ChEBI" id="CHEBI:29103"/>
    </ligand>
</feature>
<feature type="binding site" evidence="1">
    <location>
        <position position="250"/>
    </location>
    <ligand>
        <name>K(+)</name>
        <dbReference type="ChEBI" id="CHEBI:29103"/>
    </ligand>
</feature>
<feature type="binding site" evidence="1">
    <location>
        <position position="251"/>
    </location>
    <ligand>
        <name>Mg(2+)</name>
        <dbReference type="ChEBI" id="CHEBI:18420"/>
    </ligand>
</feature>
<feature type="binding site" evidence="1">
    <location>
        <begin position="270"/>
        <end position="273"/>
    </location>
    <ligand>
        <name>GTP</name>
        <dbReference type="ChEBI" id="CHEBI:37565"/>
    </ligand>
</feature>
<feature type="binding site" evidence="1">
    <location>
        <begin position="335"/>
        <end position="338"/>
    </location>
    <ligand>
        <name>GTP</name>
        <dbReference type="ChEBI" id="CHEBI:37565"/>
    </ligand>
</feature>
<feature type="binding site" evidence="1">
    <location>
        <begin position="359"/>
        <end position="361"/>
    </location>
    <ligand>
        <name>GTP</name>
        <dbReference type="ChEBI" id="CHEBI:37565"/>
    </ligand>
</feature>
<feature type="binding site" evidence="1">
    <location>
        <position position="456"/>
    </location>
    <ligand>
        <name>(6S)-5-formyl-5,6,7,8-tetrahydrofolate</name>
        <dbReference type="ChEBI" id="CHEBI:57457"/>
    </ligand>
</feature>
<keyword id="KW-0963">Cytoplasm</keyword>
<keyword id="KW-0342">GTP-binding</keyword>
<keyword id="KW-0378">Hydrolase</keyword>
<keyword id="KW-0460">Magnesium</keyword>
<keyword id="KW-0479">Metal-binding</keyword>
<keyword id="KW-0547">Nucleotide-binding</keyword>
<keyword id="KW-0630">Potassium</keyword>
<keyword id="KW-1185">Reference proteome</keyword>
<keyword id="KW-0819">tRNA processing</keyword>
<evidence type="ECO:0000255" key="1">
    <source>
        <dbReference type="HAMAP-Rule" id="MF_00379"/>
    </source>
</evidence>
<sequence length="456" mass="48743">MNVPRETIAAIATAQGRGGVGIVRVSGPLAGKTAQAITGRMPKPRFAHYGPFADESGQVLDEGIALYFPGPNSFTGEDVLELQGHGGPIVLDMLLQRCLQLGSRLARPGEFSERAFLNDKLDLAQAEAIADLIEASSAQAARNALRSLQGVFSQRVDNLTEKLISLRIYVEAAIDFPEEEIDFLADGHVLGMLDDVRAELSTVLREAGQGALLRDGMTVVIAGRPNAGKSSLLNALAGREAAIVTEIAGTTRDVLREHIHIDGMPLHVVDTAGLRDTQDQVEMIGVQRALKAIGEADRILLVVDATAPEAADPFALWPEFLEQRPDPAKVTLIRNKADLSGDSIALQTSADGHVTISLSARSGGEGLELLREHLKACMGYEQTSESSFSARRRHLEALRHASDSLEHGRAQLTLAGAGELLAEDLRQAQQALGEITGAFSSDDLLGRIFSSFCIGK</sequence>
<dbReference type="EC" id="3.6.-.-" evidence="1"/>
<dbReference type="EMBL" id="AE016853">
    <property type="protein sequence ID" value="AAO59024.1"/>
    <property type="molecule type" value="Genomic_DNA"/>
</dbReference>
<dbReference type="RefSeq" id="NP_795329.1">
    <property type="nucleotide sequence ID" value="NC_004578.1"/>
</dbReference>
<dbReference type="RefSeq" id="WP_007244945.1">
    <property type="nucleotide sequence ID" value="NC_004578.1"/>
</dbReference>
<dbReference type="SMR" id="Q87TS2"/>
<dbReference type="STRING" id="223283.PSPTO_5611"/>
<dbReference type="GeneID" id="1187303"/>
<dbReference type="KEGG" id="pst:PSPTO_5611"/>
<dbReference type="PATRIC" id="fig|223283.9.peg.5748"/>
<dbReference type="eggNOG" id="COG0486">
    <property type="taxonomic scope" value="Bacteria"/>
</dbReference>
<dbReference type="HOGENOM" id="CLU_019624_4_1_6"/>
<dbReference type="OrthoDB" id="9805918at2"/>
<dbReference type="PhylomeDB" id="Q87TS2"/>
<dbReference type="Proteomes" id="UP000002515">
    <property type="component" value="Chromosome"/>
</dbReference>
<dbReference type="GO" id="GO:0005829">
    <property type="term" value="C:cytosol"/>
    <property type="evidence" value="ECO:0007669"/>
    <property type="project" value="TreeGrafter"/>
</dbReference>
<dbReference type="GO" id="GO:0005525">
    <property type="term" value="F:GTP binding"/>
    <property type="evidence" value="ECO:0007669"/>
    <property type="project" value="UniProtKB-UniRule"/>
</dbReference>
<dbReference type="GO" id="GO:0003924">
    <property type="term" value="F:GTPase activity"/>
    <property type="evidence" value="ECO:0007669"/>
    <property type="project" value="UniProtKB-UniRule"/>
</dbReference>
<dbReference type="GO" id="GO:0046872">
    <property type="term" value="F:metal ion binding"/>
    <property type="evidence" value="ECO:0007669"/>
    <property type="project" value="UniProtKB-KW"/>
</dbReference>
<dbReference type="GO" id="GO:0030488">
    <property type="term" value="P:tRNA methylation"/>
    <property type="evidence" value="ECO:0007669"/>
    <property type="project" value="TreeGrafter"/>
</dbReference>
<dbReference type="GO" id="GO:0002098">
    <property type="term" value="P:tRNA wobble uridine modification"/>
    <property type="evidence" value="ECO:0007669"/>
    <property type="project" value="TreeGrafter"/>
</dbReference>
<dbReference type="CDD" id="cd04164">
    <property type="entry name" value="trmE"/>
    <property type="match status" value="1"/>
</dbReference>
<dbReference type="CDD" id="cd14858">
    <property type="entry name" value="TrmE_N"/>
    <property type="match status" value="1"/>
</dbReference>
<dbReference type="FunFam" id="3.30.1360.120:FF:000001">
    <property type="entry name" value="tRNA modification GTPase MnmE"/>
    <property type="match status" value="1"/>
</dbReference>
<dbReference type="FunFam" id="3.40.50.300:FF:000249">
    <property type="entry name" value="tRNA modification GTPase MnmE"/>
    <property type="match status" value="1"/>
</dbReference>
<dbReference type="Gene3D" id="3.40.50.300">
    <property type="entry name" value="P-loop containing nucleotide triphosphate hydrolases"/>
    <property type="match status" value="1"/>
</dbReference>
<dbReference type="Gene3D" id="3.30.1360.120">
    <property type="entry name" value="Probable tRNA modification gtpase trme, domain 1"/>
    <property type="match status" value="1"/>
</dbReference>
<dbReference type="Gene3D" id="1.20.120.430">
    <property type="entry name" value="tRNA modification GTPase MnmE domain 2"/>
    <property type="match status" value="1"/>
</dbReference>
<dbReference type="HAMAP" id="MF_00379">
    <property type="entry name" value="GTPase_MnmE"/>
    <property type="match status" value="1"/>
</dbReference>
<dbReference type="InterPro" id="IPR031168">
    <property type="entry name" value="G_TrmE"/>
</dbReference>
<dbReference type="InterPro" id="IPR006073">
    <property type="entry name" value="GTP-bd"/>
</dbReference>
<dbReference type="InterPro" id="IPR018948">
    <property type="entry name" value="GTP-bd_TrmE_N"/>
</dbReference>
<dbReference type="InterPro" id="IPR004520">
    <property type="entry name" value="GTPase_MnmE"/>
</dbReference>
<dbReference type="InterPro" id="IPR027368">
    <property type="entry name" value="MnmE_dom2"/>
</dbReference>
<dbReference type="InterPro" id="IPR025867">
    <property type="entry name" value="MnmE_helical"/>
</dbReference>
<dbReference type="InterPro" id="IPR027417">
    <property type="entry name" value="P-loop_NTPase"/>
</dbReference>
<dbReference type="InterPro" id="IPR005225">
    <property type="entry name" value="Small_GTP-bd"/>
</dbReference>
<dbReference type="InterPro" id="IPR027266">
    <property type="entry name" value="TrmE/GcvT_dom1"/>
</dbReference>
<dbReference type="NCBIfam" id="TIGR00450">
    <property type="entry name" value="mnmE_trmE_thdF"/>
    <property type="match status" value="1"/>
</dbReference>
<dbReference type="NCBIfam" id="NF003661">
    <property type="entry name" value="PRK05291.1-3"/>
    <property type="match status" value="1"/>
</dbReference>
<dbReference type="NCBIfam" id="TIGR00231">
    <property type="entry name" value="small_GTP"/>
    <property type="match status" value="1"/>
</dbReference>
<dbReference type="PANTHER" id="PTHR42714">
    <property type="entry name" value="TRNA MODIFICATION GTPASE GTPBP3"/>
    <property type="match status" value="1"/>
</dbReference>
<dbReference type="PANTHER" id="PTHR42714:SF2">
    <property type="entry name" value="TRNA MODIFICATION GTPASE GTPBP3, MITOCHONDRIAL"/>
    <property type="match status" value="1"/>
</dbReference>
<dbReference type="Pfam" id="PF01926">
    <property type="entry name" value="MMR_HSR1"/>
    <property type="match status" value="1"/>
</dbReference>
<dbReference type="Pfam" id="PF12631">
    <property type="entry name" value="MnmE_helical"/>
    <property type="match status" value="1"/>
</dbReference>
<dbReference type="Pfam" id="PF10396">
    <property type="entry name" value="TrmE_N"/>
    <property type="match status" value="1"/>
</dbReference>
<dbReference type="PRINTS" id="PR00326">
    <property type="entry name" value="GTP1OBG"/>
</dbReference>
<dbReference type="SUPFAM" id="SSF52540">
    <property type="entry name" value="P-loop containing nucleoside triphosphate hydrolases"/>
    <property type="match status" value="1"/>
</dbReference>
<dbReference type="SUPFAM" id="SSF116878">
    <property type="entry name" value="TrmE connector domain"/>
    <property type="match status" value="1"/>
</dbReference>
<dbReference type="PROSITE" id="PS51709">
    <property type="entry name" value="G_TRME"/>
    <property type="match status" value="1"/>
</dbReference>
<accession>Q87TS2</accession>
<organism>
    <name type="scientific">Pseudomonas syringae pv. tomato (strain ATCC BAA-871 / DC3000)</name>
    <dbReference type="NCBI Taxonomy" id="223283"/>
    <lineage>
        <taxon>Bacteria</taxon>
        <taxon>Pseudomonadati</taxon>
        <taxon>Pseudomonadota</taxon>
        <taxon>Gammaproteobacteria</taxon>
        <taxon>Pseudomonadales</taxon>
        <taxon>Pseudomonadaceae</taxon>
        <taxon>Pseudomonas</taxon>
    </lineage>
</organism>
<proteinExistence type="inferred from homology"/>
<reference key="1">
    <citation type="journal article" date="2003" name="Proc. Natl. Acad. Sci. U.S.A.">
        <title>The complete genome sequence of the Arabidopsis and tomato pathogen Pseudomonas syringae pv. tomato DC3000.</title>
        <authorList>
            <person name="Buell C.R."/>
            <person name="Joardar V."/>
            <person name="Lindeberg M."/>
            <person name="Selengut J."/>
            <person name="Paulsen I.T."/>
            <person name="Gwinn M.L."/>
            <person name="Dodson R.J."/>
            <person name="DeBoy R.T."/>
            <person name="Durkin A.S."/>
            <person name="Kolonay J.F."/>
            <person name="Madupu R."/>
            <person name="Daugherty S.C."/>
            <person name="Brinkac L.M."/>
            <person name="Beanan M.J."/>
            <person name="Haft D.H."/>
            <person name="Nelson W.C."/>
            <person name="Davidsen T.M."/>
            <person name="Zafar N."/>
            <person name="Zhou L."/>
            <person name="Liu J."/>
            <person name="Yuan Q."/>
            <person name="Khouri H.M."/>
            <person name="Fedorova N.B."/>
            <person name="Tran B."/>
            <person name="Russell D."/>
            <person name="Berry K.J."/>
            <person name="Utterback T.R."/>
            <person name="Van Aken S.E."/>
            <person name="Feldblyum T.V."/>
            <person name="D'Ascenzo M."/>
            <person name="Deng W.-L."/>
            <person name="Ramos A.R."/>
            <person name="Alfano J.R."/>
            <person name="Cartinhour S."/>
            <person name="Chatterjee A.K."/>
            <person name="Delaney T.P."/>
            <person name="Lazarowitz S.G."/>
            <person name="Martin G.B."/>
            <person name="Schneider D.J."/>
            <person name="Tang X."/>
            <person name="Bender C.L."/>
            <person name="White O."/>
            <person name="Fraser C.M."/>
            <person name="Collmer A."/>
        </authorList>
    </citation>
    <scope>NUCLEOTIDE SEQUENCE [LARGE SCALE GENOMIC DNA]</scope>
    <source>
        <strain>ATCC BAA-871 / DC3000</strain>
    </source>
</reference>
<gene>
    <name evidence="1" type="primary">mnmE</name>
    <name evidence="1" type="synonym">trmE</name>
    <name type="ordered locus">PSPTO_5611</name>
</gene>